<feature type="chain" id="PRO_0000413876" description="Proofreading thioesterase EntH">
    <location>
        <begin position="1"/>
        <end position="137"/>
    </location>
</feature>
<feature type="active site" description="Nucleophile or proton acceptor" evidence="1">
    <location>
        <position position="63"/>
    </location>
</feature>
<dbReference type="EC" id="3.1.2.-" evidence="1"/>
<dbReference type="EMBL" id="AE006468">
    <property type="protein sequence ID" value="AAL19550.1"/>
    <property type="molecule type" value="Genomic_DNA"/>
</dbReference>
<dbReference type="RefSeq" id="WP_000637965.1">
    <property type="nucleotide sequence ID" value="NC_003197.2"/>
</dbReference>
<dbReference type="SMR" id="Q8ZR29"/>
<dbReference type="STRING" id="99287.STM0599"/>
<dbReference type="PaxDb" id="99287-STM0599"/>
<dbReference type="KEGG" id="stm:STM0599"/>
<dbReference type="PATRIC" id="fig|99287.12.peg.631"/>
<dbReference type="HOGENOM" id="CLU_089876_13_1_6"/>
<dbReference type="OMA" id="QHGGVYC"/>
<dbReference type="PhylomeDB" id="Q8ZR29"/>
<dbReference type="BioCyc" id="SENT99287:STM0599-MONOMER"/>
<dbReference type="UniPathway" id="UPA00017"/>
<dbReference type="Proteomes" id="UP000001014">
    <property type="component" value="Chromosome"/>
</dbReference>
<dbReference type="GO" id="GO:0005829">
    <property type="term" value="C:cytosol"/>
    <property type="evidence" value="ECO:0000318"/>
    <property type="project" value="GO_Central"/>
</dbReference>
<dbReference type="GO" id="GO:0061522">
    <property type="term" value="F:1,4-dihydroxy-2-naphthoyl-CoA thioesterase activity"/>
    <property type="evidence" value="ECO:0000318"/>
    <property type="project" value="GO_Central"/>
</dbReference>
<dbReference type="GO" id="GO:0009239">
    <property type="term" value="P:enterobactin biosynthetic process"/>
    <property type="evidence" value="ECO:0007669"/>
    <property type="project" value="UniProtKB-UniRule"/>
</dbReference>
<dbReference type="CDD" id="cd03443">
    <property type="entry name" value="PaaI_thioesterase"/>
    <property type="match status" value="1"/>
</dbReference>
<dbReference type="FunFam" id="3.10.129.10:FF:000002">
    <property type="entry name" value="1,4-dihydroxy-2-naphthoyl-CoA hydrolase"/>
    <property type="match status" value="1"/>
</dbReference>
<dbReference type="Gene3D" id="3.10.129.10">
    <property type="entry name" value="Hotdog Thioesterase"/>
    <property type="match status" value="1"/>
</dbReference>
<dbReference type="HAMAP" id="MF_00907">
    <property type="entry name" value="Thioesterase_EntH"/>
    <property type="match status" value="1"/>
</dbReference>
<dbReference type="InterPro" id="IPR029069">
    <property type="entry name" value="HotDog_dom_sf"/>
</dbReference>
<dbReference type="InterPro" id="IPR003736">
    <property type="entry name" value="PAAI_dom"/>
</dbReference>
<dbReference type="InterPro" id="IPR026576">
    <property type="entry name" value="Thioesterase_EntH"/>
</dbReference>
<dbReference type="InterPro" id="IPR006683">
    <property type="entry name" value="Thioestr_dom"/>
</dbReference>
<dbReference type="NCBIfam" id="NF007607">
    <property type="entry name" value="PRK10254.1"/>
    <property type="match status" value="1"/>
</dbReference>
<dbReference type="NCBIfam" id="TIGR00369">
    <property type="entry name" value="unchar_dom_1"/>
    <property type="match status" value="1"/>
</dbReference>
<dbReference type="PANTHER" id="PTHR43240">
    <property type="entry name" value="1,4-DIHYDROXY-2-NAPHTHOYL-COA THIOESTERASE 1"/>
    <property type="match status" value="1"/>
</dbReference>
<dbReference type="PANTHER" id="PTHR43240:SF9">
    <property type="entry name" value="PROOFREADING THIOESTERASE ENTH"/>
    <property type="match status" value="1"/>
</dbReference>
<dbReference type="Pfam" id="PF03061">
    <property type="entry name" value="4HBT"/>
    <property type="match status" value="1"/>
</dbReference>
<dbReference type="SUPFAM" id="SSF54637">
    <property type="entry name" value="Thioesterase/thiol ester dehydrase-isomerase"/>
    <property type="match status" value="1"/>
</dbReference>
<reference key="1">
    <citation type="journal article" date="2001" name="Nature">
        <title>Complete genome sequence of Salmonella enterica serovar Typhimurium LT2.</title>
        <authorList>
            <person name="McClelland M."/>
            <person name="Sanderson K.E."/>
            <person name="Spieth J."/>
            <person name="Clifton S.W."/>
            <person name="Latreille P."/>
            <person name="Courtney L."/>
            <person name="Porwollik S."/>
            <person name="Ali J."/>
            <person name="Dante M."/>
            <person name="Du F."/>
            <person name="Hou S."/>
            <person name="Layman D."/>
            <person name="Leonard S."/>
            <person name="Nguyen C."/>
            <person name="Scott K."/>
            <person name="Holmes A."/>
            <person name="Grewal N."/>
            <person name="Mulvaney E."/>
            <person name="Ryan E."/>
            <person name="Sun H."/>
            <person name="Florea L."/>
            <person name="Miller W."/>
            <person name="Stoneking T."/>
            <person name="Nhan M."/>
            <person name="Waterston R."/>
            <person name="Wilson R.K."/>
        </authorList>
    </citation>
    <scope>NUCLEOTIDE SEQUENCE [LARGE SCALE GENOMIC DNA]</scope>
    <source>
        <strain>LT2 / SGSC1412 / ATCC 700720</strain>
    </source>
</reference>
<protein>
    <recommendedName>
        <fullName evidence="1">Proofreading thioesterase EntH</fullName>
        <ecNumber evidence="1">3.1.2.-</ecNumber>
    </recommendedName>
    <alternativeName>
        <fullName evidence="1">Enterobactin synthase component H</fullName>
    </alternativeName>
</protein>
<accession>Q8ZR29</accession>
<keyword id="KW-0963">Cytoplasm</keyword>
<keyword id="KW-0378">Hydrolase</keyword>
<keyword id="KW-1185">Reference proteome</keyword>
<proteinExistence type="inferred from homology"/>
<comment type="function">
    <text evidence="1">Required for optimal enterobactin synthesis. Acts as a proofreading enzyme that prevents EntB misacylation by hydrolyzing the thioester bound existing between EntB and wrongly charged molecules.</text>
</comment>
<comment type="pathway">
    <text evidence="1">Siderophore biosynthesis; enterobactin biosynthesis.</text>
</comment>
<comment type="subunit">
    <text evidence="1">Homotetramer. Dimer of dimers. Interacts specifically with the aryl carrier protein (ArCP) domain of EntB.</text>
</comment>
<comment type="subcellular location">
    <subcellularLocation>
        <location evidence="1">Cytoplasm</location>
    </subcellularLocation>
</comment>
<comment type="similarity">
    <text evidence="1">Belongs to the thioesterase PaaI family.</text>
</comment>
<name>ENTH_SALTY</name>
<gene>
    <name evidence="1" type="primary">entH</name>
    <name type="ordered locus">STM0599</name>
</gene>
<evidence type="ECO:0000255" key="1">
    <source>
        <dbReference type="HAMAP-Rule" id="MF_00907"/>
    </source>
</evidence>
<sequence length="137" mass="14939">MIWKRHLTLDELNATSQNTLVAHLGIVYTRLGDDVLEAEMPVDARTHQPFGLLHGGASAALAETLGSMAGYLMTRDGQCVVGTELNATHHRAISQGKVRGVCLPLHLGRQNQSWEITLFDEQGRRCCTCRLGTAVMG</sequence>
<organism>
    <name type="scientific">Salmonella typhimurium (strain LT2 / SGSC1412 / ATCC 700720)</name>
    <dbReference type="NCBI Taxonomy" id="99287"/>
    <lineage>
        <taxon>Bacteria</taxon>
        <taxon>Pseudomonadati</taxon>
        <taxon>Pseudomonadota</taxon>
        <taxon>Gammaproteobacteria</taxon>
        <taxon>Enterobacterales</taxon>
        <taxon>Enterobacteriaceae</taxon>
        <taxon>Salmonella</taxon>
    </lineage>
</organism>